<protein>
    <recommendedName>
        <fullName evidence="1">Tryptophan synthase alpha chain</fullName>
        <ecNumber evidence="1">4.2.1.20</ecNumber>
    </recommendedName>
</protein>
<organism>
    <name type="scientific">Acinetobacter baumannii (strain AB0057)</name>
    <dbReference type="NCBI Taxonomy" id="480119"/>
    <lineage>
        <taxon>Bacteria</taxon>
        <taxon>Pseudomonadati</taxon>
        <taxon>Pseudomonadota</taxon>
        <taxon>Gammaproteobacteria</taxon>
        <taxon>Moraxellales</taxon>
        <taxon>Moraxellaceae</taxon>
        <taxon>Acinetobacter</taxon>
        <taxon>Acinetobacter calcoaceticus/baumannii complex</taxon>
    </lineage>
</organism>
<reference key="1">
    <citation type="journal article" date="2008" name="J. Bacteriol.">
        <title>Comparative genome sequence analysis of multidrug-resistant Acinetobacter baumannii.</title>
        <authorList>
            <person name="Adams M.D."/>
            <person name="Goglin K."/>
            <person name="Molyneaux N."/>
            <person name="Hujer K.M."/>
            <person name="Lavender H."/>
            <person name="Jamison J.J."/>
            <person name="MacDonald I.J."/>
            <person name="Martin K.M."/>
            <person name="Russo T."/>
            <person name="Campagnari A.A."/>
            <person name="Hujer A.M."/>
            <person name="Bonomo R.A."/>
            <person name="Gill S.R."/>
        </authorList>
    </citation>
    <scope>NUCLEOTIDE SEQUENCE [LARGE SCALE GENOMIC DNA]</scope>
    <source>
        <strain>AB0057</strain>
    </source>
</reference>
<gene>
    <name evidence="1" type="primary">trpA</name>
    <name type="ordered locus">AB57_3373</name>
</gene>
<keyword id="KW-0028">Amino-acid biosynthesis</keyword>
<keyword id="KW-0057">Aromatic amino acid biosynthesis</keyword>
<keyword id="KW-0456">Lyase</keyword>
<keyword id="KW-0822">Tryptophan biosynthesis</keyword>
<feature type="chain" id="PRO_1000117727" description="Tryptophan synthase alpha chain">
    <location>
        <begin position="1"/>
        <end position="267"/>
    </location>
</feature>
<feature type="active site" description="Proton acceptor" evidence="1">
    <location>
        <position position="49"/>
    </location>
</feature>
<feature type="active site" description="Proton acceptor" evidence="1">
    <location>
        <position position="60"/>
    </location>
</feature>
<accession>B7I8K2</accession>
<evidence type="ECO:0000255" key="1">
    <source>
        <dbReference type="HAMAP-Rule" id="MF_00131"/>
    </source>
</evidence>
<proteinExistence type="inferred from homology"/>
<sequence>MSRLATRFEKLQSQQRKALVSYVMAGDPQPQVTVPLLHKMVAAGVDVIELGLPFSDPMADGPVIALAAERALAAGTNTLDALNMVKEFREQDQETPVVLMGYLNPVEVIGYEKFVSYAKQCGVDGLLLVDLPPEESKEFGAILKQHDMDQIFLLAPTSTDQRIQHVANQASGFIYYVSLKGVTGAATLDTSEAAARIEKIKGMTNVPVGVGFGISDAASAKAMGSVADAVIVGSAFVKSFATLAADEAVEQTVNKVKELRAALDELV</sequence>
<dbReference type="EC" id="4.2.1.20" evidence="1"/>
<dbReference type="EMBL" id="CP001182">
    <property type="protein sequence ID" value="ACJ41945.1"/>
    <property type="molecule type" value="Genomic_DNA"/>
</dbReference>
<dbReference type="RefSeq" id="WP_000088559.1">
    <property type="nucleotide sequence ID" value="NC_011586.2"/>
</dbReference>
<dbReference type="SMR" id="B7I8K2"/>
<dbReference type="GeneID" id="92895147"/>
<dbReference type="KEGG" id="abn:AB57_3373"/>
<dbReference type="HOGENOM" id="CLU_016734_0_0_6"/>
<dbReference type="UniPathway" id="UPA00035">
    <property type="reaction ID" value="UER00044"/>
</dbReference>
<dbReference type="Proteomes" id="UP000007094">
    <property type="component" value="Chromosome"/>
</dbReference>
<dbReference type="GO" id="GO:0005829">
    <property type="term" value="C:cytosol"/>
    <property type="evidence" value="ECO:0007669"/>
    <property type="project" value="TreeGrafter"/>
</dbReference>
<dbReference type="GO" id="GO:0004834">
    <property type="term" value="F:tryptophan synthase activity"/>
    <property type="evidence" value="ECO:0007669"/>
    <property type="project" value="UniProtKB-UniRule"/>
</dbReference>
<dbReference type="CDD" id="cd04724">
    <property type="entry name" value="Tryptophan_synthase_alpha"/>
    <property type="match status" value="1"/>
</dbReference>
<dbReference type="FunFam" id="3.20.20.70:FF:000037">
    <property type="entry name" value="Tryptophan synthase alpha chain"/>
    <property type="match status" value="1"/>
</dbReference>
<dbReference type="Gene3D" id="3.20.20.70">
    <property type="entry name" value="Aldolase class I"/>
    <property type="match status" value="1"/>
</dbReference>
<dbReference type="HAMAP" id="MF_00131">
    <property type="entry name" value="Trp_synth_alpha"/>
    <property type="match status" value="1"/>
</dbReference>
<dbReference type="InterPro" id="IPR013785">
    <property type="entry name" value="Aldolase_TIM"/>
</dbReference>
<dbReference type="InterPro" id="IPR011060">
    <property type="entry name" value="RibuloseP-bd_barrel"/>
</dbReference>
<dbReference type="InterPro" id="IPR018204">
    <property type="entry name" value="Trp_synthase_alpha_AS"/>
</dbReference>
<dbReference type="InterPro" id="IPR002028">
    <property type="entry name" value="Trp_synthase_suA"/>
</dbReference>
<dbReference type="NCBIfam" id="TIGR00262">
    <property type="entry name" value="trpA"/>
    <property type="match status" value="1"/>
</dbReference>
<dbReference type="PANTHER" id="PTHR43406:SF1">
    <property type="entry name" value="TRYPTOPHAN SYNTHASE ALPHA CHAIN, CHLOROPLASTIC"/>
    <property type="match status" value="1"/>
</dbReference>
<dbReference type="PANTHER" id="PTHR43406">
    <property type="entry name" value="TRYPTOPHAN SYNTHASE, ALPHA CHAIN"/>
    <property type="match status" value="1"/>
</dbReference>
<dbReference type="Pfam" id="PF00290">
    <property type="entry name" value="Trp_syntA"/>
    <property type="match status" value="1"/>
</dbReference>
<dbReference type="SUPFAM" id="SSF51366">
    <property type="entry name" value="Ribulose-phoshate binding barrel"/>
    <property type="match status" value="1"/>
</dbReference>
<dbReference type="PROSITE" id="PS00167">
    <property type="entry name" value="TRP_SYNTHASE_ALPHA"/>
    <property type="match status" value="1"/>
</dbReference>
<name>TRPA_ACIB5</name>
<comment type="function">
    <text evidence="1">The alpha subunit is responsible for the aldol cleavage of indoleglycerol phosphate to indole and glyceraldehyde 3-phosphate.</text>
</comment>
<comment type="catalytic activity">
    <reaction evidence="1">
        <text>(1S,2R)-1-C-(indol-3-yl)glycerol 3-phosphate + L-serine = D-glyceraldehyde 3-phosphate + L-tryptophan + H2O</text>
        <dbReference type="Rhea" id="RHEA:10532"/>
        <dbReference type="ChEBI" id="CHEBI:15377"/>
        <dbReference type="ChEBI" id="CHEBI:33384"/>
        <dbReference type="ChEBI" id="CHEBI:57912"/>
        <dbReference type="ChEBI" id="CHEBI:58866"/>
        <dbReference type="ChEBI" id="CHEBI:59776"/>
        <dbReference type="EC" id="4.2.1.20"/>
    </reaction>
</comment>
<comment type="pathway">
    <text evidence="1">Amino-acid biosynthesis; L-tryptophan biosynthesis; L-tryptophan from chorismate: step 5/5.</text>
</comment>
<comment type="subunit">
    <text evidence="1">Tetramer of two alpha and two beta chains.</text>
</comment>
<comment type="similarity">
    <text evidence="1">Belongs to the TrpA family.</text>
</comment>